<feature type="chain" id="PRO_1000136490" description="Phosphoenolpyruvate synthase regulatory protein">
    <location>
        <begin position="1"/>
        <end position="277"/>
    </location>
</feature>
<feature type="binding site" evidence="1">
    <location>
        <begin position="157"/>
        <end position="164"/>
    </location>
    <ligand>
        <name>ADP</name>
        <dbReference type="ChEBI" id="CHEBI:456216"/>
    </ligand>
</feature>
<gene>
    <name evidence="1" type="primary">ppsR</name>
    <name type="ordered locus">SEN1696</name>
</gene>
<comment type="function">
    <text evidence="1">Bifunctional serine/threonine kinase and phosphorylase involved in the regulation of the phosphoenolpyruvate synthase (PEPS) by catalyzing its phosphorylation/dephosphorylation.</text>
</comment>
<comment type="catalytic activity">
    <reaction evidence="1">
        <text>[pyruvate, water dikinase] + ADP = [pyruvate, water dikinase]-phosphate + AMP + H(+)</text>
        <dbReference type="Rhea" id="RHEA:46020"/>
        <dbReference type="Rhea" id="RHEA-COMP:11425"/>
        <dbReference type="Rhea" id="RHEA-COMP:11426"/>
        <dbReference type="ChEBI" id="CHEBI:15378"/>
        <dbReference type="ChEBI" id="CHEBI:43176"/>
        <dbReference type="ChEBI" id="CHEBI:68546"/>
        <dbReference type="ChEBI" id="CHEBI:456215"/>
        <dbReference type="ChEBI" id="CHEBI:456216"/>
        <dbReference type="EC" id="2.7.11.33"/>
    </reaction>
</comment>
<comment type="catalytic activity">
    <reaction evidence="1">
        <text>[pyruvate, water dikinase]-phosphate + phosphate + H(+) = [pyruvate, water dikinase] + diphosphate</text>
        <dbReference type="Rhea" id="RHEA:48580"/>
        <dbReference type="Rhea" id="RHEA-COMP:11425"/>
        <dbReference type="Rhea" id="RHEA-COMP:11426"/>
        <dbReference type="ChEBI" id="CHEBI:15378"/>
        <dbReference type="ChEBI" id="CHEBI:33019"/>
        <dbReference type="ChEBI" id="CHEBI:43176"/>
        <dbReference type="ChEBI" id="CHEBI:43474"/>
        <dbReference type="ChEBI" id="CHEBI:68546"/>
        <dbReference type="EC" id="2.7.4.28"/>
    </reaction>
</comment>
<comment type="similarity">
    <text evidence="1">Belongs to the pyruvate, phosphate/water dikinase regulatory protein family. PSRP subfamily.</text>
</comment>
<accession>B5QVV3</accession>
<evidence type="ECO:0000255" key="1">
    <source>
        <dbReference type="HAMAP-Rule" id="MF_01062"/>
    </source>
</evidence>
<keyword id="KW-0418">Kinase</keyword>
<keyword id="KW-0547">Nucleotide-binding</keyword>
<keyword id="KW-0723">Serine/threonine-protein kinase</keyword>
<keyword id="KW-0808">Transferase</keyword>
<sequence>MDNVVDRHVFYISDGTAITAEVLGHAVMSQFPVTISSITLPFVENESRARAVKDQIDAIYQQTGVRPLVFYSIVLPEIRAIILQSEGFCQDIVQALVAPLQQEMKLDPTPIAHRTHGLNPGNLNKYDARIAAIDYTLAHDDGISLRNLDQAQVILLGVSRCGKTPTSLYLAMQFGIRAANYPFIADDMDNLTLPTSLKPLQHKLFGLTIDPERLAAIREERRENSRYASLRQCRMEVAEVEALYRKNQIPCLNSTNYSVEEIATKILDIMGLNRRMY</sequence>
<organism>
    <name type="scientific">Salmonella enteritidis PT4 (strain P125109)</name>
    <dbReference type="NCBI Taxonomy" id="550537"/>
    <lineage>
        <taxon>Bacteria</taxon>
        <taxon>Pseudomonadati</taxon>
        <taxon>Pseudomonadota</taxon>
        <taxon>Gammaproteobacteria</taxon>
        <taxon>Enterobacterales</taxon>
        <taxon>Enterobacteriaceae</taxon>
        <taxon>Salmonella</taxon>
    </lineage>
</organism>
<dbReference type="EC" id="2.7.11.33" evidence="1"/>
<dbReference type="EC" id="2.7.4.28" evidence="1"/>
<dbReference type="EMBL" id="AM933172">
    <property type="protein sequence ID" value="CAR33278.1"/>
    <property type="molecule type" value="Genomic_DNA"/>
</dbReference>
<dbReference type="RefSeq" id="WP_000370992.1">
    <property type="nucleotide sequence ID" value="NC_011294.1"/>
</dbReference>
<dbReference type="SMR" id="B5QVV3"/>
<dbReference type="KEGG" id="set:SEN1696"/>
<dbReference type="HOGENOM" id="CLU_046206_1_0_6"/>
<dbReference type="Proteomes" id="UP000000613">
    <property type="component" value="Chromosome"/>
</dbReference>
<dbReference type="GO" id="GO:0043531">
    <property type="term" value="F:ADP binding"/>
    <property type="evidence" value="ECO:0007669"/>
    <property type="project" value="UniProtKB-UniRule"/>
</dbReference>
<dbReference type="GO" id="GO:0005524">
    <property type="term" value="F:ATP binding"/>
    <property type="evidence" value="ECO:0007669"/>
    <property type="project" value="InterPro"/>
</dbReference>
<dbReference type="GO" id="GO:0016776">
    <property type="term" value="F:phosphotransferase activity, phosphate group as acceptor"/>
    <property type="evidence" value="ECO:0007669"/>
    <property type="project" value="UniProtKB-UniRule"/>
</dbReference>
<dbReference type="GO" id="GO:0004674">
    <property type="term" value="F:protein serine/threonine kinase activity"/>
    <property type="evidence" value="ECO:0007669"/>
    <property type="project" value="UniProtKB-UniRule"/>
</dbReference>
<dbReference type="HAMAP" id="MF_01062">
    <property type="entry name" value="PSRP"/>
    <property type="match status" value="1"/>
</dbReference>
<dbReference type="InterPro" id="IPR005177">
    <property type="entry name" value="Kinase-pyrophosphorylase"/>
</dbReference>
<dbReference type="InterPro" id="IPR026530">
    <property type="entry name" value="PSRP"/>
</dbReference>
<dbReference type="NCBIfam" id="NF003742">
    <property type="entry name" value="PRK05339.1"/>
    <property type="match status" value="1"/>
</dbReference>
<dbReference type="PANTHER" id="PTHR31756">
    <property type="entry name" value="PYRUVATE, PHOSPHATE DIKINASE REGULATORY PROTEIN 1, CHLOROPLASTIC"/>
    <property type="match status" value="1"/>
</dbReference>
<dbReference type="PANTHER" id="PTHR31756:SF3">
    <property type="entry name" value="PYRUVATE, PHOSPHATE DIKINASE REGULATORY PROTEIN 1, CHLOROPLASTIC"/>
    <property type="match status" value="1"/>
</dbReference>
<dbReference type="Pfam" id="PF03618">
    <property type="entry name" value="Kinase-PPPase"/>
    <property type="match status" value="1"/>
</dbReference>
<protein>
    <recommendedName>
        <fullName evidence="1">Phosphoenolpyruvate synthase regulatory protein</fullName>
        <shortName evidence="1">PEP synthase regulatory protein</shortName>
        <shortName evidence="1">PSRP</shortName>
        <ecNumber evidence="1">2.7.11.33</ecNumber>
        <ecNumber evidence="1">2.7.4.28</ecNumber>
    </recommendedName>
    <alternativeName>
        <fullName evidence="1">Pyruvate, water dikinase regulatory protein</fullName>
    </alternativeName>
</protein>
<proteinExistence type="inferred from homology"/>
<reference key="1">
    <citation type="journal article" date="2008" name="Genome Res.">
        <title>Comparative genome analysis of Salmonella enteritidis PT4 and Salmonella gallinarum 287/91 provides insights into evolutionary and host adaptation pathways.</title>
        <authorList>
            <person name="Thomson N.R."/>
            <person name="Clayton D.J."/>
            <person name="Windhorst D."/>
            <person name="Vernikos G."/>
            <person name="Davidson S."/>
            <person name="Churcher C."/>
            <person name="Quail M.A."/>
            <person name="Stevens M."/>
            <person name="Jones M.A."/>
            <person name="Watson M."/>
            <person name="Barron A."/>
            <person name="Layton A."/>
            <person name="Pickard D."/>
            <person name="Kingsley R.A."/>
            <person name="Bignell A."/>
            <person name="Clark L."/>
            <person name="Harris B."/>
            <person name="Ormond D."/>
            <person name="Abdellah Z."/>
            <person name="Brooks K."/>
            <person name="Cherevach I."/>
            <person name="Chillingworth T."/>
            <person name="Woodward J."/>
            <person name="Norberczak H."/>
            <person name="Lord A."/>
            <person name="Arrowsmith C."/>
            <person name="Jagels K."/>
            <person name="Moule S."/>
            <person name="Mungall K."/>
            <person name="Saunders M."/>
            <person name="Whitehead S."/>
            <person name="Chabalgoity J.A."/>
            <person name="Maskell D."/>
            <person name="Humphreys T."/>
            <person name="Roberts M."/>
            <person name="Barrow P.A."/>
            <person name="Dougan G."/>
            <person name="Parkhill J."/>
        </authorList>
    </citation>
    <scope>NUCLEOTIDE SEQUENCE [LARGE SCALE GENOMIC DNA]</scope>
    <source>
        <strain>P125109</strain>
    </source>
</reference>
<name>PSRP_SALEP</name>